<keyword id="KW-1038">Host endoplasmic reticulum</keyword>
<keyword id="KW-1040">Host Golgi apparatus</keyword>
<keyword id="KW-1043">Host membrane</keyword>
<keyword id="KW-0945">Host-virus interaction</keyword>
<keyword id="KW-0378">Hydrolase</keyword>
<keyword id="KW-0426">Late protein</keyword>
<keyword id="KW-0449">Lipoprotein</keyword>
<keyword id="KW-0472">Membrane</keyword>
<keyword id="KW-0564">Palmitate</keyword>
<keyword id="KW-1185">Reference proteome</keyword>
<keyword id="KW-1198">Viral budding</keyword>
<keyword id="KW-1187">Viral budding via the host ESCRT complexes</keyword>
<keyword id="KW-0261">Viral envelope protein</keyword>
<keyword id="KW-1188">Viral release from host cell</keyword>
<keyword id="KW-0946">Virion</keyword>
<organismHost>
    <name type="scientific">Cynomys gunnisoni</name>
    <name type="common">Gunnison's prairie dog</name>
    <name type="synonym">Spermophilus gunnisoni</name>
    <dbReference type="NCBI Taxonomy" id="45479"/>
</organismHost>
<organismHost>
    <name type="scientific">Cynomys leucurus</name>
    <name type="common">White-tailed prairie dog</name>
    <dbReference type="NCBI Taxonomy" id="99825"/>
</organismHost>
<organismHost>
    <name type="scientific">Cynomys ludovicianus</name>
    <name type="common">Black-tailed prairie dog</name>
    <dbReference type="NCBI Taxonomy" id="45480"/>
</organismHost>
<organismHost>
    <name type="scientific">Cynomys mexicanus</name>
    <name type="common">Mexican prairie dog</name>
    <dbReference type="NCBI Taxonomy" id="99826"/>
</organismHost>
<organismHost>
    <name type="scientific">Cynomys parvidens</name>
    <name type="common">Utah prairie dog</name>
    <dbReference type="NCBI Taxonomy" id="99827"/>
</organismHost>
<organismHost>
    <name type="scientific">Gliridae</name>
    <name type="common">dormice</name>
    <dbReference type="NCBI Taxonomy" id="30650"/>
</organismHost>
<organismHost>
    <name type="scientific">Heliosciurus ruwenzorii</name>
    <name type="common">Ruwenzori sun squirrel</name>
    <dbReference type="NCBI Taxonomy" id="226685"/>
</organismHost>
<organismHost>
    <name type="scientific">Homo sapiens</name>
    <name type="common">Human</name>
    <dbReference type="NCBI Taxonomy" id="9606"/>
</organismHost>
<organismHost>
    <name type="scientific">Mus musculus</name>
    <name type="common">Mouse</name>
    <dbReference type="NCBI Taxonomy" id="10090"/>
</organismHost>
<comment type="function">
    <text evidence="1">Major envelope protein that plays a role in the biogenesis of the viral double membrane and in egress of virus from the host cell. Produces the wrapped form of virus that is required for cell-to-cell spread. Acts as a lipase with broad specificity including phospholipase C, phospholipase A, and triacylglycerol lipase activities.</text>
</comment>
<comment type="catalytic activity">
    <reaction evidence="1">
        <text>a 1,2-diacyl-sn-glycero-3-phosphocholine + H2O = a 1,2-diacyl-sn-glycero-3-phosphate + choline + H(+)</text>
        <dbReference type="Rhea" id="RHEA:14445"/>
        <dbReference type="ChEBI" id="CHEBI:15354"/>
        <dbReference type="ChEBI" id="CHEBI:15377"/>
        <dbReference type="ChEBI" id="CHEBI:15378"/>
        <dbReference type="ChEBI" id="CHEBI:57643"/>
        <dbReference type="ChEBI" id="CHEBI:58608"/>
        <dbReference type="EC" id="3.1.4.4"/>
    </reaction>
    <physiologicalReaction direction="left-to-right" evidence="1">
        <dbReference type="Rhea" id="RHEA:14446"/>
    </physiologicalReaction>
</comment>
<comment type="subunit">
    <text evidence="1">Interacts with protein OPG190.</text>
</comment>
<comment type="subcellular location">
    <subcellularLocation>
        <location evidence="1">Virion membrane</location>
        <topology evidence="1">Lipid-anchor</topology>
    </subcellularLocation>
    <subcellularLocation>
        <location evidence="1">Host Golgi apparatus</location>
        <location evidence="1">Host trans-Golgi network</location>
    </subcellularLocation>
    <subcellularLocation>
        <location evidence="1">Host endoplasmic reticulum membrane</location>
        <topology evidence="1">Lipid-anchor</topology>
        <orientation evidence="1">Cytoplasmic side</orientation>
    </subcellularLocation>
    <text evidence="1">Component of the inner side of the enveloped virion (EV) membrane. F13 is associated post-translationally with membranes.</text>
</comment>
<comment type="induction">
    <text evidence="1">Expressed in the intermediate phase of the viral replicative cycle.</text>
</comment>
<comment type="domain">
    <text evidence="1">Late-budding domains (L domains) are short sequence motifs essential for viral particle budding. They recruit proteins of the host ESCRT machinery (Endosomal Sorting Complex Required for Transport) or ESCRT-associated proteins. F13 contains one L domain: a YPPL motif, which might interact with PDCD6IP/AIP1.</text>
</comment>
<comment type="PTM">
    <text evidence="1">Palmitoylated. Attachment of the palmitate moiety is essential for correct intracellular targeting and protein function.</text>
</comment>
<comment type="similarity">
    <text evidence="3">Belongs to the orthopoxvirus OPG057 family.</text>
</comment>
<gene>
    <name type="primary">OPG057</name>
    <name type="ORF">MPXVgp045</name>
</gene>
<sequence length="372" mass="41808">MWPFASVPAGAKCRLVETLPENMDFRSDHLTTFECFNEIITLAKKYIYIASFCCNPLSTTRGALIFDKLKEVSEKGIKIIVLLDERGKRNLGELQSHSPDINFITVNIDKKNNVGLLLGCFWVSDDERCYVGNASFTGGSIHTIKTLGVYSDYPPLATDLRRRFDTFKAFNSAKNSWLNLCSAACCLPVSTAYHIKNPIGGVFFTDSPEHLLGYSRDLDTDVVIDKLKSAKTSIDIEHLAIVPTTRVDGNSYYWPDIYNSIIEAAINRGVKIRLLVGNWDKNDVYSMATARSLDALCVQNDLSVKVFTIQNNTKLLIVDDEYVHITSANFDGTHYQNHGFVSFNSIDKQLVSEAKKIFERDWVSSHSKSLKI</sequence>
<dbReference type="EC" id="3.1.1.-" evidence="1"/>
<dbReference type="EC" id="3.1.4.4" evidence="1"/>
<dbReference type="EMBL" id="MT903340">
    <property type="protein sequence ID" value="QNP12913.1"/>
    <property type="molecule type" value="Genomic_DNA"/>
</dbReference>
<dbReference type="RefSeq" id="YP_010377040.1">
    <property type="nucleotide sequence ID" value="NC_063383.1"/>
</dbReference>
<dbReference type="SMR" id="A0A7H0DN30"/>
<dbReference type="ChEMBL" id="CHEMBL5308523"/>
<dbReference type="GeneID" id="72551453"/>
<dbReference type="Proteomes" id="UP000516359">
    <property type="component" value="Genome"/>
</dbReference>
<dbReference type="GO" id="GO:0044167">
    <property type="term" value="C:host cell endoplasmic reticulum membrane"/>
    <property type="evidence" value="ECO:0007669"/>
    <property type="project" value="UniProtKB-SubCell"/>
</dbReference>
<dbReference type="GO" id="GO:0044177">
    <property type="term" value="C:host cell Golgi apparatus"/>
    <property type="evidence" value="ECO:0007669"/>
    <property type="project" value="UniProtKB-SubCell"/>
</dbReference>
<dbReference type="GO" id="GO:0016020">
    <property type="term" value="C:membrane"/>
    <property type="evidence" value="ECO:0007669"/>
    <property type="project" value="UniProtKB-KW"/>
</dbReference>
<dbReference type="GO" id="GO:0019031">
    <property type="term" value="C:viral envelope"/>
    <property type="evidence" value="ECO:0007669"/>
    <property type="project" value="UniProtKB-KW"/>
</dbReference>
<dbReference type="GO" id="GO:0055036">
    <property type="term" value="C:virion membrane"/>
    <property type="evidence" value="ECO:0007669"/>
    <property type="project" value="UniProtKB-SubCell"/>
</dbReference>
<dbReference type="GO" id="GO:0016787">
    <property type="term" value="F:hydrolase activity"/>
    <property type="evidence" value="ECO:0007669"/>
    <property type="project" value="UniProtKB-KW"/>
</dbReference>
<dbReference type="GO" id="GO:0039702">
    <property type="term" value="P:viral budding via host ESCRT complex"/>
    <property type="evidence" value="ECO:0007669"/>
    <property type="project" value="UniProtKB-KW"/>
</dbReference>
<dbReference type="CDD" id="cd09106">
    <property type="entry name" value="PLDc_vPLD3_4_5_like_1"/>
    <property type="match status" value="1"/>
</dbReference>
<dbReference type="CDD" id="cd09107">
    <property type="entry name" value="PLDc_vPLD3_4_5_like_2"/>
    <property type="match status" value="1"/>
</dbReference>
<dbReference type="FunFam" id="3.30.870.10:FF:000040">
    <property type="entry name" value="Envelope phospholipase F13"/>
    <property type="match status" value="1"/>
</dbReference>
<dbReference type="FunFam" id="3.30.870.10:FF:000041">
    <property type="entry name" value="Envelope phospholipase F13"/>
    <property type="match status" value="1"/>
</dbReference>
<dbReference type="Gene3D" id="3.30.870.10">
    <property type="entry name" value="Endonuclease Chain A"/>
    <property type="match status" value="2"/>
</dbReference>
<dbReference type="InterPro" id="IPR050874">
    <property type="entry name" value="Diverse_PLD-related"/>
</dbReference>
<dbReference type="InterPro" id="IPR032803">
    <property type="entry name" value="PLDc_3"/>
</dbReference>
<dbReference type="InterPro" id="IPR001736">
    <property type="entry name" value="PLipase_D/transphosphatidylase"/>
</dbReference>
<dbReference type="PANTHER" id="PTHR10185:SF17">
    <property type="entry name" value="GM01519P-RELATED"/>
    <property type="match status" value="1"/>
</dbReference>
<dbReference type="PANTHER" id="PTHR10185">
    <property type="entry name" value="PHOSPHOLIPASE D - RELATED"/>
    <property type="match status" value="1"/>
</dbReference>
<dbReference type="Pfam" id="PF13918">
    <property type="entry name" value="PLDc_3"/>
    <property type="match status" value="1"/>
</dbReference>
<dbReference type="SMART" id="SM00155">
    <property type="entry name" value="PLDc"/>
    <property type="match status" value="2"/>
</dbReference>
<dbReference type="SUPFAM" id="SSF56024">
    <property type="entry name" value="Phospholipase D/nuclease"/>
    <property type="match status" value="2"/>
</dbReference>
<dbReference type="PROSITE" id="PS50035">
    <property type="entry name" value="PLD"/>
    <property type="match status" value="1"/>
</dbReference>
<protein>
    <recommendedName>
        <fullName>Envelope phospholipase OPG057</fullName>
        <ecNumber evidence="1">3.1.1.-</ecNumber>
        <ecNumber evidence="1">3.1.4.4</ecNumber>
    </recommendedName>
</protein>
<accession>A0A7H0DN30</accession>
<reference key="1">
    <citation type="journal article" date="2022" name="J. Infect. Dis.">
        <title>Exportation of Monkeypox virus from the African continent.</title>
        <authorList>
            <person name="Mauldin M.R."/>
            <person name="McCollum A.M."/>
            <person name="Nakazawa Y.J."/>
            <person name="Mandra A."/>
            <person name="Whitehouse E.R."/>
            <person name="Davidson W."/>
            <person name="Zhao H."/>
            <person name="Gao J."/>
            <person name="Li Y."/>
            <person name="Doty J."/>
            <person name="Yinka-Ogunleye A."/>
            <person name="Akinpelu A."/>
            <person name="Aruna O."/>
            <person name="Naidoo D."/>
            <person name="Lewandowski K."/>
            <person name="Afrough B."/>
            <person name="Graham V."/>
            <person name="Aarons E."/>
            <person name="Hewson R."/>
            <person name="Vipond R."/>
            <person name="Dunning J."/>
            <person name="Chand M."/>
            <person name="Brown C."/>
            <person name="Cohen-Gihon I."/>
            <person name="Erez N."/>
            <person name="Shifman O."/>
            <person name="Israeli O."/>
            <person name="Sharon M."/>
            <person name="Schwartz E."/>
            <person name="Beth-Din A."/>
            <person name="Zvi A."/>
            <person name="Mak T.M."/>
            <person name="Ng Y.K."/>
            <person name="Cui L."/>
            <person name="Lin R.T.P."/>
            <person name="Olson V.A."/>
            <person name="Brooks T."/>
            <person name="Paran N."/>
            <person name="Ihekweazu C."/>
            <person name="Reynolds M.G."/>
        </authorList>
    </citation>
    <scope>NUCLEOTIDE SEQUENCE [LARGE SCALE GENOMIC DNA]</scope>
    <source>
        <strain>MPXV-M5312_HM12_Rivers</strain>
    </source>
</reference>
<name>PG057_MONPV</name>
<evidence type="ECO:0000250" key="1">
    <source>
        <dbReference type="UniProtKB" id="P04021"/>
    </source>
</evidence>
<evidence type="ECO:0000255" key="2">
    <source>
        <dbReference type="PROSITE-ProRule" id="PRU00153"/>
    </source>
</evidence>
<evidence type="ECO:0000305" key="3"/>
<organism>
    <name type="scientific">Monkeypox virus</name>
    <dbReference type="NCBI Taxonomy" id="10244"/>
    <lineage>
        <taxon>Viruses</taxon>
        <taxon>Varidnaviria</taxon>
        <taxon>Bamfordvirae</taxon>
        <taxon>Nucleocytoviricota</taxon>
        <taxon>Pokkesviricetes</taxon>
        <taxon>Chitovirales</taxon>
        <taxon>Poxviridae</taxon>
        <taxon>Chordopoxvirinae</taxon>
        <taxon>Orthopoxvirus</taxon>
    </lineage>
</organism>
<feature type="chain" id="PRO_0000457650" description="Envelope phospholipase OPG057">
    <location>
        <begin position="1"/>
        <end position="372"/>
    </location>
</feature>
<feature type="domain" description="PLD phosphodiesterase" evidence="2">
    <location>
        <begin position="307"/>
        <end position="334"/>
    </location>
</feature>
<feature type="short sequence motif" description="YPPL" evidence="1">
    <location>
        <begin position="153"/>
        <end position="156"/>
    </location>
</feature>
<feature type="lipid moiety-binding region" description="S-palmitoyl cysteine; by host" evidence="1">
    <location>
        <position position="185"/>
    </location>
</feature>
<feature type="lipid moiety-binding region" description="S-palmitoyl cysteine; by host" evidence="1">
    <location>
        <position position="186"/>
    </location>
</feature>
<proteinExistence type="inferred from homology"/>